<organism>
    <name type="scientific">Streptococcus pyogenes serotype M5 (strain Manfredo)</name>
    <dbReference type="NCBI Taxonomy" id="160491"/>
    <lineage>
        <taxon>Bacteria</taxon>
        <taxon>Bacillati</taxon>
        <taxon>Bacillota</taxon>
        <taxon>Bacilli</taxon>
        <taxon>Lactobacillales</taxon>
        <taxon>Streptococcaceae</taxon>
        <taxon>Streptococcus</taxon>
    </lineage>
</organism>
<evidence type="ECO:0000255" key="1">
    <source>
        <dbReference type="HAMAP-Rule" id="MF_01805"/>
    </source>
</evidence>
<dbReference type="EMBL" id="AM295007">
    <property type="protein sequence ID" value="CAM30871.1"/>
    <property type="molecule type" value="Genomic_DNA"/>
</dbReference>
<dbReference type="RefSeq" id="WP_011889128.1">
    <property type="nucleotide sequence ID" value="NC_009332.1"/>
</dbReference>
<dbReference type="SMR" id="A2RG92"/>
<dbReference type="KEGG" id="spf:SpyM51550"/>
<dbReference type="HOGENOM" id="CLU_038686_3_3_9"/>
<dbReference type="GO" id="GO:0005737">
    <property type="term" value="C:cytoplasm"/>
    <property type="evidence" value="ECO:0007669"/>
    <property type="project" value="UniProtKB-SubCell"/>
</dbReference>
<dbReference type="GO" id="GO:0051301">
    <property type="term" value="P:cell division"/>
    <property type="evidence" value="ECO:0007669"/>
    <property type="project" value="UniProtKB-KW"/>
</dbReference>
<dbReference type="GO" id="GO:0007059">
    <property type="term" value="P:chromosome segregation"/>
    <property type="evidence" value="ECO:0007669"/>
    <property type="project" value="UniProtKB-UniRule"/>
</dbReference>
<dbReference type="GO" id="GO:0006260">
    <property type="term" value="P:DNA replication"/>
    <property type="evidence" value="ECO:0007669"/>
    <property type="project" value="UniProtKB-UniRule"/>
</dbReference>
<dbReference type="Gene3D" id="6.10.250.2410">
    <property type="match status" value="1"/>
</dbReference>
<dbReference type="HAMAP" id="MF_01805">
    <property type="entry name" value="ScpA"/>
    <property type="match status" value="1"/>
</dbReference>
<dbReference type="InterPro" id="IPR003768">
    <property type="entry name" value="ScpA"/>
</dbReference>
<dbReference type="NCBIfam" id="NF000993">
    <property type="entry name" value="PRK00104.1-2"/>
    <property type="match status" value="1"/>
</dbReference>
<dbReference type="PANTHER" id="PTHR33969">
    <property type="entry name" value="SEGREGATION AND CONDENSATION PROTEIN A"/>
    <property type="match status" value="1"/>
</dbReference>
<dbReference type="PANTHER" id="PTHR33969:SF2">
    <property type="entry name" value="SEGREGATION AND CONDENSATION PROTEIN A"/>
    <property type="match status" value="1"/>
</dbReference>
<dbReference type="Pfam" id="PF02616">
    <property type="entry name" value="SMC_ScpA"/>
    <property type="match status" value="1"/>
</dbReference>
<proteinExistence type="inferred from homology"/>
<protein>
    <recommendedName>
        <fullName evidence="1">Segregation and condensation protein A</fullName>
    </recommendedName>
</protein>
<comment type="function">
    <text evidence="1">Participates in chromosomal partition during cell division. May act via the formation of a condensin-like complex containing Smc and ScpB that pull DNA away from mid-cell into both cell halves.</text>
</comment>
<comment type="subunit">
    <text evidence="1">Component of a cohesin-like complex composed of ScpA, ScpB and the Smc homodimer, in which ScpA and ScpB bind to the head domain of Smc. The presence of the three proteins is required for the association of the complex with DNA.</text>
</comment>
<comment type="subcellular location">
    <subcellularLocation>
        <location evidence="1">Cytoplasm</location>
    </subcellularLocation>
    <text evidence="1">Associated with two foci at the outer edges of the nucleoid region in young cells, and at four foci within both cell halves in older cells.</text>
</comment>
<comment type="similarity">
    <text evidence="1">Belongs to the ScpA family.</text>
</comment>
<name>SCPA_STRPG</name>
<sequence>MDIKLKDFEGPLDLLLHLVSQYKVDIYEVPIVEVIEQYLNYIETLQVMKLEVAGDYMLMASQLMLIKSRRLLPKVVEHIEEEDLEQDLLEKIEEYSRFKAVSQALAKQHDQRAKWYSKPKQELIFEDAILQEDKTVMDLFLAFSNIMAAKRAVLKNNHTVIERDDYKIEDMMASIKQRLEKENVISLSAIFEECQTLNEVISIFLASLELIKLHVVFVEQLSNFGDIILRKEKR</sequence>
<keyword id="KW-0131">Cell cycle</keyword>
<keyword id="KW-0132">Cell division</keyword>
<keyword id="KW-0159">Chromosome partition</keyword>
<keyword id="KW-0963">Cytoplasm</keyword>
<accession>A2RG92</accession>
<feature type="chain" id="PRO_1000069984" description="Segregation and condensation protein A">
    <location>
        <begin position="1"/>
        <end position="234"/>
    </location>
</feature>
<gene>
    <name evidence="1" type="primary">scpA</name>
    <name type="ordered locus">SpyM51550</name>
</gene>
<reference key="1">
    <citation type="journal article" date="2007" name="J. Bacteriol.">
        <title>Complete genome of acute rheumatic fever-associated serotype M5 Streptococcus pyogenes strain Manfredo.</title>
        <authorList>
            <person name="Holden M.T.G."/>
            <person name="Scott A."/>
            <person name="Cherevach I."/>
            <person name="Chillingworth T."/>
            <person name="Churcher C."/>
            <person name="Cronin A."/>
            <person name="Dowd L."/>
            <person name="Feltwell T."/>
            <person name="Hamlin N."/>
            <person name="Holroyd S."/>
            <person name="Jagels K."/>
            <person name="Moule S."/>
            <person name="Mungall K."/>
            <person name="Quail M.A."/>
            <person name="Price C."/>
            <person name="Rabbinowitsch E."/>
            <person name="Sharp S."/>
            <person name="Skelton J."/>
            <person name="Whitehead S."/>
            <person name="Barrell B.G."/>
            <person name="Kehoe M."/>
            <person name="Parkhill J."/>
        </authorList>
    </citation>
    <scope>NUCLEOTIDE SEQUENCE [LARGE SCALE GENOMIC DNA]</scope>
    <source>
        <strain>Manfredo</strain>
    </source>
</reference>